<feature type="chain" id="PRO_0000252176" description="UPF0386 protein Atu1321">
    <location>
        <begin position="1"/>
        <end position="85"/>
    </location>
</feature>
<organism>
    <name type="scientific">Agrobacterium fabrum (strain C58 / ATCC 33970)</name>
    <name type="common">Agrobacterium tumefaciens (strain C58)</name>
    <dbReference type="NCBI Taxonomy" id="176299"/>
    <lineage>
        <taxon>Bacteria</taxon>
        <taxon>Pseudomonadati</taxon>
        <taxon>Pseudomonadota</taxon>
        <taxon>Alphaproteobacteria</taxon>
        <taxon>Hyphomicrobiales</taxon>
        <taxon>Rhizobiaceae</taxon>
        <taxon>Rhizobium/Agrobacterium group</taxon>
        <taxon>Agrobacterium</taxon>
        <taxon>Agrobacterium tumefaciens complex</taxon>
    </lineage>
</organism>
<protein>
    <recommendedName>
        <fullName evidence="1">UPF0386 protein Atu1321</fullName>
    </recommendedName>
</protein>
<name>Y1321_AGRFC</name>
<proteinExistence type="inferred from homology"/>
<sequence>MDISRAEQRILHLLAQGGRIELVRDDTRKIEKITLYTRDGWIFGGLDLLTFRKLKQKRAIASSGGKPYRITTRGLELVRGELDNR</sequence>
<dbReference type="EMBL" id="AE007869">
    <property type="protein sequence ID" value="AAL42327.1"/>
    <property type="molecule type" value="Genomic_DNA"/>
</dbReference>
<dbReference type="PIR" id="AI2738">
    <property type="entry name" value="AI2738"/>
</dbReference>
<dbReference type="RefSeq" id="NP_532011.1">
    <property type="nucleotide sequence ID" value="NC_003062.2"/>
</dbReference>
<dbReference type="RefSeq" id="WP_006312635.1">
    <property type="nucleotide sequence ID" value="NC_003062.2"/>
</dbReference>
<dbReference type="STRING" id="176299.Atu1321"/>
<dbReference type="EnsemblBacteria" id="AAL42327">
    <property type="protein sequence ID" value="AAL42327"/>
    <property type="gene ID" value="Atu1321"/>
</dbReference>
<dbReference type="GeneID" id="1133359"/>
<dbReference type="KEGG" id="atu:Atu1321"/>
<dbReference type="PATRIC" id="fig|176299.10.peg.1338"/>
<dbReference type="eggNOG" id="COG3811">
    <property type="taxonomic scope" value="Bacteria"/>
</dbReference>
<dbReference type="HOGENOM" id="CLU_164736_0_0_5"/>
<dbReference type="OrthoDB" id="7204880at2"/>
<dbReference type="PhylomeDB" id="Q8UFS6"/>
<dbReference type="BioCyc" id="AGRO:ATU1321-MONOMER"/>
<dbReference type="Proteomes" id="UP000000813">
    <property type="component" value="Chromosome circular"/>
</dbReference>
<dbReference type="HAMAP" id="MF_00827">
    <property type="entry name" value="UPF0386"/>
    <property type="match status" value="1"/>
</dbReference>
<dbReference type="InterPro" id="IPR018654">
    <property type="entry name" value="YjhX_toxin"/>
</dbReference>
<dbReference type="NCBIfam" id="NF010240">
    <property type="entry name" value="PRK13687.1"/>
    <property type="match status" value="1"/>
</dbReference>
<dbReference type="Pfam" id="PF09857">
    <property type="entry name" value="YjhX_toxin"/>
    <property type="match status" value="1"/>
</dbReference>
<reference key="1">
    <citation type="journal article" date="2001" name="Science">
        <title>The genome of the natural genetic engineer Agrobacterium tumefaciens C58.</title>
        <authorList>
            <person name="Wood D.W."/>
            <person name="Setubal J.C."/>
            <person name="Kaul R."/>
            <person name="Monks D.E."/>
            <person name="Kitajima J.P."/>
            <person name="Okura V.K."/>
            <person name="Zhou Y."/>
            <person name="Chen L."/>
            <person name="Wood G.E."/>
            <person name="Almeida N.F. Jr."/>
            <person name="Woo L."/>
            <person name="Chen Y."/>
            <person name="Paulsen I.T."/>
            <person name="Eisen J.A."/>
            <person name="Karp P.D."/>
            <person name="Bovee D. Sr."/>
            <person name="Chapman P."/>
            <person name="Clendenning J."/>
            <person name="Deatherage G."/>
            <person name="Gillet W."/>
            <person name="Grant C."/>
            <person name="Kutyavin T."/>
            <person name="Levy R."/>
            <person name="Li M.-J."/>
            <person name="McClelland E."/>
            <person name="Palmieri A."/>
            <person name="Raymond C."/>
            <person name="Rouse G."/>
            <person name="Saenphimmachak C."/>
            <person name="Wu Z."/>
            <person name="Romero P."/>
            <person name="Gordon D."/>
            <person name="Zhang S."/>
            <person name="Yoo H."/>
            <person name="Tao Y."/>
            <person name="Biddle P."/>
            <person name="Jung M."/>
            <person name="Krespan W."/>
            <person name="Perry M."/>
            <person name="Gordon-Kamm B."/>
            <person name="Liao L."/>
            <person name="Kim S."/>
            <person name="Hendrick C."/>
            <person name="Zhao Z.-Y."/>
            <person name="Dolan M."/>
            <person name="Chumley F."/>
            <person name="Tingey S.V."/>
            <person name="Tomb J.-F."/>
            <person name="Gordon M.P."/>
            <person name="Olson M.V."/>
            <person name="Nester E.W."/>
        </authorList>
    </citation>
    <scope>NUCLEOTIDE SEQUENCE [LARGE SCALE GENOMIC DNA]</scope>
    <source>
        <strain>C58 / ATCC 33970</strain>
    </source>
</reference>
<reference key="2">
    <citation type="journal article" date="2001" name="Science">
        <title>Genome sequence of the plant pathogen and biotechnology agent Agrobacterium tumefaciens C58.</title>
        <authorList>
            <person name="Goodner B."/>
            <person name="Hinkle G."/>
            <person name="Gattung S."/>
            <person name="Miller N."/>
            <person name="Blanchard M."/>
            <person name="Qurollo B."/>
            <person name="Goldman B.S."/>
            <person name="Cao Y."/>
            <person name="Askenazi M."/>
            <person name="Halling C."/>
            <person name="Mullin L."/>
            <person name="Houmiel K."/>
            <person name="Gordon J."/>
            <person name="Vaudin M."/>
            <person name="Iartchouk O."/>
            <person name="Epp A."/>
            <person name="Liu F."/>
            <person name="Wollam C."/>
            <person name="Allinger M."/>
            <person name="Doughty D."/>
            <person name="Scott C."/>
            <person name="Lappas C."/>
            <person name="Markelz B."/>
            <person name="Flanagan C."/>
            <person name="Crowell C."/>
            <person name="Gurson J."/>
            <person name="Lomo C."/>
            <person name="Sear C."/>
            <person name="Strub G."/>
            <person name="Cielo C."/>
            <person name="Slater S."/>
        </authorList>
    </citation>
    <scope>NUCLEOTIDE SEQUENCE [LARGE SCALE GENOMIC DNA]</scope>
    <source>
        <strain>C58 / ATCC 33970</strain>
    </source>
</reference>
<keyword id="KW-1185">Reference proteome</keyword>
<evidence type="ECO:0000255" key="1">
    <source>
        <dbReference type="HAMAP-Rule" id="MF_00827"/>
    </source>
</evidence>
<accession>Q8UFS6</accession>
<comment type="similarity">
    <text evidence="1">Belongs to the UPF0386 family.</text>
</comment>
<gene>
    <name type="ordered locus">Atu1321</name>
    <name type="ORF">AGR_C_2433</name>
</gene>